<name>RL17_WOLSU</name>
<dbReference type="EMBL" id="BX571661">
    <property type="protein sequence ID" value="CAE10718.1"/>
    <property type="molecule type" value="Genomic_DNA"/>
</dbReference>
<dbReference type="RefSeq" id="WP_011139502.1">
    <property type="nucleotide sequence ID" value="NC_005090.1"/>
</dbReference>
<dbReference type="SMR" id="Q7M8F8"/>
<dbReference type="STRING" id="273121.WS1691"/>
<dbReference type="KEGG" id="wsu:WS1691"/>
<dbReference type="eggNOG" id="COG0203">
    <property type="taxonomic scope" value="Bacteria"/>
</dbReference>
<dbReference type="HOGENOM" id="CLU_074407_2_0_7"/>
<dbReference type="Proteomes" id="UP000000422">
    <property type="component" value="Chromosome"/>
</dbReference>
<dbReference type="GO" id="GO:0022625">
    <property type="term" value="C:cytosolic large ribosomal subunit"/>
    <property type="evidence" value="ECO:0007669"/>
    <property type="project" value="TreeGrafter"/>
</dbReference>
<dbReference type="GO" id="GO:0003735">
    <property type="term" value="F:structural constituent of ribosome"/>
    <property type="evidence" value="ECO:0007669"/>
    <property type="project" value="InterPro"/>
</dbReference>
<dbReference type="GO" id="GO:0006412">
    <property type="term" value="P:translation"/>
    <property type="evidence" value="ECO:0007669"/>
    <property type="project" value="UniProtKB-UniRule"/>
</dbReference>
<dbReference type="FunFam" id="3.90.1030.10:FF:000003">
    <property type="entry name" value="50S ribosomal protein L17"/>
    <property type="match status" value="1"/>
</dbReference>
<dbReference type="Gene3D" id="3.90.1030.10">
    <property type="entry name" value="Ribosomal protein L17"/>
    <property type="match status" value="1"/>
</dbReference>
<dbReference type="HAMAP" id="MF_01368">
    <property type="entry name" value="Ribosomal_bL17"/>
    <property type="match status" value="1"/>
</dbReference>
<dbReference type="InterPro" id="IPR000456">
    <property type="entry name" value="Ribosomal_bL17"/>
</dbReference>
<dbReference type="InterPro" id="IPR036373">
    <property type="entry name" value="Ribosomal_bL17_sf"/>
</dbReference>
<dbReference type="NCBIfam" id="TIGR00059">
    <property type="entry name" value="L17"/>
    <property type="match status" value="1"/>
</dbReference>
<dbReference type="PANTHER" id="PTHR14413:SF16">
    <property type="entry name" value="LARGE RIBOSOMAL SUBUNIT PROTEIN BL17M"/>
    <property type="match status" value="1"/>
</dbReference>
<dbReference type="PANTHER" id="PTHR14413">
    <property type="entry name" value="RIBOSOMAL PROTEIN L17"/>
    <property type="match status" value="1"/>
</dbReference>
<dbReference type="Pfam" id="PF01196">
    <property type="entry name" value="Ribosomal_L17"/>
    <property type="match status" value="1"/>
</dbReference>
<dbReference type="SUPFAM" id="SSF64263">
    <property type="entry name" value="Prokaryotic ribosomal protein L17"/>
    <property type="match status" value="1"/>
</dbReference>
<accession>Q7M8F8</accession>
<gene>
    <name evidence="1" type="primary">rplQ</name>
    <name type="ordered locus">WS1691</name>
</gene>
<proteinExistence type="inferred from homology"/>
<protein>
    <recommendedName>
        <fullName evidence="1">Large ribosomal subunit protein bL17</fullName>
    </recommendedName>
    <alternativeName>
        <fullName evidence="2">50S ribosomal protein L17</fullName>
    </alternativeName>
</protein>
<feature type="chain" id="PRO_0000267968" description="Large ribosomal subunit protein bL17">
    <location>
        <begin position="1"/>
        <end position="116"/>
    </location>
</feature>
<evidence type="ECO:0000255" key="1">
    <source>
        <dbReference type="HAMAP-Rule" id="MF_01368"/>
    </source>
</evidence>
<evidence type="ECO:0000305" key="2"/>
<sequence length="116" mass="13121">MRHNHGYRKLGRTSAHRKALLKNLAIALVENQKIETTVIKAKELQSYIEKLITKASEGSFNAHRAVFAHLQDKNATNKLVVEIAPKYSDRKGGYTRIVRTRLRKGDAAPLAFIELI</sequence>
<keyword id="KW-1185">Reference proteome</keyword>
<keyword id="KW-0687">Ribonucleoprotein</keyword>
<keyword id="KW-0689">Ribosomal protein</keyword>
<comment type="subunit">
    <text evidence="1">Part of the 50S ribosomal subunit. Contacts protein L32.</text>
</comment>
<comment type="similarity">
    <text evidence="1">Belongs to the bacterial ribosomal protein bL17 family.</text>
</comment>
<reference key="1">
    <citation type="journal article" date="2003" name="Proc. Natl. Acad. Sci. U.S.A.">
        <title>Complete genome sequence and analysis of Wolinella succinogenes.</title>
        <authorList>
            <person name="Baar C."/>
            <person name="Eppinger M."/>
            <person name="Raddatz G."/>
            <person name="Simon J."/>
            <person name="Lanz C."/>
            <person name="Klimmek O."/>
            <person name="Nandakumar R."/>
            <person name="Gross R."/>
            <person name="Rosinus A."/>
            <person name="Keller H."/>
            <person name="Jagtap P."/>
            <person name="Linke B."/>
            <person name="Meyer F."/>
            <person name="Lederer H."/>
            <person name="Schuster S.C."/>
        </authorList>
    </citation>
    <scope>NUCLEOTIDE SEQUENCE [LARGE SCALE GENOMIC DNA]</scope>
    <source>
        <strain>ATCC 29543 / DSM 1740 / CCUG 13145 / JCM 31913 / LMG 7466 / NCTC 11488 / FDC 602W</strain>
    </source>
</reference>
<organism>
    <name type="scientific">Wolinella succinogenes (strain ATCC 29543 / DSM 1740 / CCUG 13145 / JCM 31913 / LMG 7466 / NCTC 11488 / FDC 602W)</name>
    <name type="common">Vibrio succinogenes</name>
    <dbReference type="NCBI Taxonomy" id="273121"/>
    <lineage>
        <taxon>Bacteria</taxon>
        <taxon>Pseudomonadati</taxon>
        <taxon>Campylobacterota</taxon>
        <taxon>Epsilonproteobacteria</taxon>
        <taxon>Campylobacterales</taxon>
        <taxon>Helicobacteraceae</taxon>
        <taxon>Wolinella</taxon>
    </lineage>
</organism>